<proteinExistence type="inferred from homology"/>
<dbReference type="EC" id="7.1.2.2" evidence="1"/>
<dbReference type="EMBL" id="CP000305">
    <property type="protein sequence ID" value="ABG20305.1"/>
    <property type="molecule type" value="Genomic_DNA"/>
</dbReference>
<dbReference type="EMBL" id="ACNQ01000019">
    <property type="protein sequence ID" value="EEO74904.1"/>
    <property type="molecule type" value="Genomic_DNA"/>
</dbReference>
<dbReference type="RefSeq" id="WP_002220753.1">
    <property type="nucleotide sequence ID" value="NZ_ACNQ01000019.1"/>
</dbReference>
<dbReference type="SMR" id="Q1CCH5"/>
<dbReference type="GeneID" id="57974603"/>
<dbReference type="KEGG" id="ypn:YPN_3978"/>
<dbReference type="HOGENOM" id="CLU_022398_0_2_6"/>
<dbReference type="Proteomes" id="UP000008936">
    <property type="component" value="Chromosome"/>
</dbReference>
<dbReference type="GO" id="GO:0005886">
    <property type="term" value="C:plasma membrane"/>
    <property type="evidence" value="ECO:0007669"/>
    <property type="project" value="UniProtKB-SubCell"/>
</dbReference>
<dbReference type="GO" id="GO:0045259">
    <property type="term" value="C:proton-transporting ATP synthase complex"/>
    <property type="evidence" value="ECO:0007669"/>
    <property type="project" value="UniProtKB-KW"/>
</dbReference>
<dbReference type="GO" id="GO:0005524">
    <property type="term" value="F:ATP binding"/>
    <property type="evidence" value="ECO:0007669"/>
    <property type="project" value="UniProtKB-UniRule"/>
</dbReference>
<dbReference type="GO" id="GO:0016887">
    <property type="term" value="F:ATP hydrolysis activity"/>
    <property type="evidence" value="ECO:0007669"/>
    <property type="project" value="InterPro"/>
</dbReference>
<dbReference type="GO" id="GO:0046933">
    <property type="term" value="F:proton-transporting ATP synthase activity, rotational mechanism"/>
    <property type="evidence" value="ECO:0007669"/>
    <property type="project" value="UniProtKB-UniRule"/>
</dbReference>
<dbReference type="CDD" id="cd18110">
    <property type="entry name" value="ATP-synt_F1_beta_C"/>
    <property type="match status" value="1"/>
</dbReference>
<dbReference type="CDD" id="cd18115">
    <property type="entry name" value="ATP-synt_F1_beta_N"/>
    <property type="match status" value="1"/>
</dbReference>
<dbReference type="CDD" id="cd01133">
    <property type="entry name" value="F1-ATPase_beta_CD"/>
    <property type="match status" value="1"/>
</dbReference>
<dbReference type="FunFam" id="1.10.1140.10:FF:000001">
    <property type="entry name" value="ATP synthase subunit beta"/>
    <property type="match status" value="1"/>
</dbReference>
<dbReference type="FunFam" id="2.40.10.170:FF:000003">
    <property type="entry name" value="ATP synthase subunit beta"/>
    <property type="match status" value="1"/>
</dbReference>
<dbReference type="FunFam" id="3.40.50.300:FF:000004">
    <property type="entry name" value="ATP synthase subunit beta"/>
    <property type="match status" value="1"/>
</dbReference>
<dbReference type="Gene3D" id="2.40.10.170">
    <property type="match status" value="1"/>
</dbReference>
<dbReference type="Gene3D" id="1.10.1140.10">
    <property type="entry name" value="Bovine Mitochondrial F1-atpase, Atp Synthase Beta Chain, Chain D, domain 3"/>
    <property type="match status" value="1"/>
</dbReference>
<dbReference type="Gene3D" id="3.40.50.300">
    <property type="entry name" value="P-loop containing nucleotide triphosphate hydrolases"/>
    <property type="match status" value="1"/>
</dbReference>
<dbReference type="HAMAP" id="MF_01347">
    <property type="entry name" value="ATP_synth_beta_bact"/>
    <property type="match status" value="1"/>
</dbReference>
<dbReference type="InterPro" id="IPR003593">
    <property type="entry name" value="AAA+_ATPase"/>
</dbReference>
<dbReference type="InterPro" id="IPR055190">
    <property type="entry name" value="ATP-synt_VA_C"/>
</dbReference>
<dbReference type="InterPro" id="IPR005722">
    <property type="entry name" value="ATP_synth_F1_bsu"/>
</dbReference>
<dbReference type="InterPro" id="IPR020003">
    <property type="entry name" value="ATPase_a/bsu_AS"/>
</dbReference>
<dbReference type="InterPro" id="IPR050053">
    <property type="entry name" value="ATPase_alpha/beta_chains"/>
</dbReference>
<dbReference type="InterPro" id="IPR004100">
    <property type="entry name" value="ATPase_F1/V1/A1_a/bsu_N"/>
</dbReference>
<dbReference type="InterPro" id="IPR036121">
    <property type="entry name" value="ATPase_F1/V1/A1_a/bsu_N_sf"/>
</dbReference>
<dbReference type="InterPro" id="IPR000194">
    <property type="entry name" value="ATPase_F1/V1/A1_a/bsu_nucl-bd"/>
</dbReference>
<dbReference type="InterPro" id="IPR024034">
    <property type="entry name" value="ATPase_F1/V1_b/a_C"/>
</dbReference>
<dbReference type="InterPro" id="IPR027417">
    <property type="entry name" value="P-loop_NTPase"/>
</dbReference>
<dbReference type="NCBIfam" id="TIGR01039">
    <property type="entry name" value="atpD"/>
    <property type="match status" value="1"/>
</dbReference>
<dbReference type="PANTHER" id="PTHR15184">
    <property type="entry name" value="ATP SYNTHASE"/>
    <property type="match status" value="1"/>
</dbReference>
<dbReference type="PANTHER" id="PTHR15184:SF71">
    <property type="entry name" value="ATP SYNTHASE SUBUNIT BETA, MITOCHONDRIAL"/>
    <property type="match status" value="1"/>
</dbReference>
<dbReference type="Pfam" id="PF00006">
    <property type="entry name" value="ATP-synt_ab"/>
    <property type="match status" value="1"/>
</dbReference>
<dbReference type="Pfam" id="PF02874">
    <property type="entry name" value="ATP-synt_ab_N"/>
    <property type="match status" value="1"/>
</dbReference>
<dbReference type="Pfam" id="PF22919">
    <property type="entry name" value="ATP-synt_VA_C"/>
    <property type="match status" value="1"/>
</dbReference>
<dbReference type="SMART" id="SM00382">
    <property type="entry name" value="AAA"/>
    <property type="match status" value="1"/>
</dbReference>
<dbReference type="SUPFAM" id="SSF47917">
    <property type="entry name" value="C-terminal domain of alpha and beta subunits of F1 ATP synthase"/>
    <property type="match status" value="1"/>
</dbReference>
<dbReference type="SUPFAM" id="SSF50615">
    <property type="entry name" value="N-terminal domain of alpha and beta subunits of F1 ATP synthase"/>
    <property type="match status" value="1"/>
</dbReference>
<dbReference type="SUPFAM" id="SSF52540">
    <property type="entry name" value="P-loop containing nucleoside triphosphate hydrolases"/>
    <property type="match status" value="1"/>
</dbReference>
<dbReference type="PROSITE" id="PS00152">
    <property type="entry name" value="ATPASE_ALPHA_BETA"/>
    <property type="match status" value="1"/>
</dbReference>
<organism>
    <name type="scientific">Yersinia pestis bv. Antiqua (strain Nepal516)</name>
    <dbReference type="NCBI Taxonomy" id="377628"/>
    <lineage>
        <taxon>Bacteria</taxon>
        <taxon>Pseudomonadati</taxon>
        <taxon>Pseudomonadota</taxon>
        <taxon>Gammaproteobacteria</taxon>
        <taxon>Enterobacterales</taxon>
        <taxon>Yersiniaceae</taxon>
        <taxon>Yersinia</taxon>
    </lineage>
</organism>
<name>ATPB_YERPN</name>
<gene>
    <name evidence="1" type="primary">atpD</name>
    <name type="ordered locus">YPN_3978</name>
    <name type="ORF">YP516_4514</name>
</gene>
<sequence>MATGKIIQVIGAVVDVEFPQDAVPKVYNALEVEGTTEKLVLEVQQQLGGGVVRCIAMGSSDGLSRGLKVTNLEHPIEVPVGKATLGRIMNVLGEPIDMKGPIGEEERWAIHREAPSYEELASSQDLLETGIKVMDLICPFAKGGKVGLFGGAGVGKTVNMMELIRNIAIEHSGYSVFAGVGERTREGNDFYHEMTDSNVLDKVSLVYGQMNEPPGNRLRVALTGLTMAEKFRDEGRDVLLFIDNIYRYTLAGTEVSALLGRMPSAVGYQPTLAEEMGVLQERITSTKTGSITSVQAVYVPADDLTDPSPATTFAHLDATVVLSRQIASLGIYPAVDPLDSTSRQLDPLVVGQEHYDVARGVQSILQRYQELKDIIAILGMDELSEDDKLVVSRARKIQRFLSQPFFVAEVFTGSPGKFVSLKDTIRGFKGIMNGDYDHLPEQAFYMVGTIEEAVEKAKKL</sequence>
<keyword id="KW-0066">ATP synthesis</keyword>
<keyword id="KW-0067">ATP-binding</keyword>
<keyword id="KW-0997">Cell inner membrane</keyword>
<keyword id="KW-1003">Cell membrane</keyword>
<keyword id="KW-0139">CF(1)</keyword>
<keyword id="KW-0375">Hydrogen ion transport</keyword>
<keyword id="KW-0406">Ion transport</keyword>
<keyword id="KW-0472">Membrane</keyword>
<keyword id="KW-0547">Nucleotide-binding</keyword>
<keyword id="KW-1278">Translocase</keyword>
<keyword id="KW-0813">Transport</keyword>
<accession>Q1CCH5</accession>
<accession>D1Q301</accession>
<reference key="1">
    <citation type="journal article" date="2006" name="J. Bacteriol.">
        <title>Complete genome sequence of Yersinia pestis strains Antiqua and Nepal516: evidence of gene reduction in an emerging pathogen.</title>
        <authorList>
            <person name="Chain P.S.G."/>
            <person name="Hu P."/>
            <person name="Malfatti S.A."/>
            <person name="Radnedge L."/>
            <person name="Larimer F."/>
            <person name="Vergez L.M."/>
            <person name="Worsham P."/>
            <person name="Chu M.C."/>
            <person name="Andersen G.L."/>
        </authorList>
    </citation>
    <scope>NUCLEOTIDE SEQUENCE [LARGE SCALE GENOMIC DNA]</scope>
    <source>
        <strain>Nepal516</strain>
    </source>
</reference>
<reference key="2">
    <citation type="submission" date="2009-04" db="EMBL/GenBank/DDBJ databases">
        <title>Yersinia pestis Nepal516A whole genome shotgun sequencing project.</title>
        <authorList>
            <person name="Plunkett G. III"/>
            <person name="Anderson B.D."/>
            <person name="Baumler D.J."/>
            <person name="Burland V."/>
            <person name="Cabot E.L."/>
            <person name="Glasner J.D."/>
            <person name="Mau B."/>
            <person name="Neeno-Eckwall E."/>
            <person name="Perna N.T."/>
            <person name="Munk A.C."/>
            <person name="Tapia R."/>
            <person name="Green L.D."/>
            <person name="Rogers Y.C."/>
            <person name="Detter J.C."/>
            <person name="Bruce D.C."/>
            <person name="Brettin T.S."/>
        </authorList>
    </citation>
    <scope>NUCLEOTIDE SEQUENCE [LARGE SCALE GENOMIC DNA]</scope>
    <source>
        <strain>Nepal516</strain>
    </source>
</reference>
<feature type="chain" id="PRO_1000055182" description="ATP synthase subunit beta">
    <location>
        <begin position="1"/>
        <end position="460"/>
    </location>
</feature>
<feature type="binding site" evidence="1">
    <location>
        <begin position="150"/>
        <end position="157"/>
    </location>
    <ligand>
        <name>ATP</name>
        <dbReference type="ChEBI" id="CHEBI:30616"/>
    </ligand>
</feature>
<evidence type="ECO:0000255" key="1">
    <source>
        <dbReference type="HAMAP-Rule" id="MF_01347"/>
    </source>
</evidence>
<comment type="function">
    <text evidence="1">Produces ATP from ADP in the presence of a proton gradient across the membrane. The catalytic sites are hosted primarily by the beta subunits.</text>
</comment>
<comment type="catalytic activity">
    <reaction evidence="1">
        <text>ATP + H2O + 4 H(+)(in) = ADP + phosphate + 5 H(+)(out)</text>
        <dbReference type="Rhea" id="RHEA:57720"/>
        <dbReference type="ChEBI" id="CHEBI:15377"/>
        <dbReference type="ChEBI" id="CHEBI:15378"/>
        <dbReference type="ChEBI" id="CHEBI:30616"/>
        <dbReference type="ChEBI" id="CHEBI:43474"/>
        <dbReference type="ChEBI" id="CHEBI:456216"/>
        <dbReference type="EC" id="7.1.2.2"/>
    </reaction>
</comment>
<comment type="subunit">
    <text evidence="1">F-type ATPases have 2 components, CF(1) - the catalytic core - and CF(0) - the membrane proton channel. CF(1) has five subunits: alpha(3), beta(3), gamma(1), delta(1), epsilon(1). CF(0) has three main subunits: a(1), b(2) and c(9-12). The alpha and beta chains form an alternating ring which encloses part of the gamma chain. CF(1) is attached to CF(0) by a central stalk formed by the gamma and epsilon chains, while a peripheral stalk is formed by the delta and b chains.</text>
</comment>
<comment type="subcellular location">
    <subcellularLocation>
        <location evidence="1">Cell inner membrane</location>
        <topology evidence="1">Peripheral membrane protein</topology>
    </subcellularLocation>
</comment>
<comment type="similarity">
    <text evidence="1">Belongs to the ATPase alpha/beta chains family.</text>
</comment>
<protein>
    <recommendedName>
        <fullName evidence="1">ATP synthase subunit beta</fullName>
        <ecNumber evidence="1">7.1.2.2</ecNumber>
    </recommendedName>
    <alternativeName>
        <fullName evidence="1">ATP synthase F1 sector subunit beta</fullName>
    </alternativeName>
    <alternativeName>
        <fullName evidence="1">F-ATPase subunit beta</fullName>
    </alternativeName>
</protein>